<accession>P35587</accession>
<accession>Q25080</accession>
<feature type="signal peptide" evidence="2">
    <location>
        <begin position="1"/>
        <end position="22"/>
    </location>
</feature>
<feature type="propeptide" id="PRO_0000027917" description="Activation peptide" evidence="4">
    <location>
        <begin position="23"/>
        <end position="30"/>
    </location>
</feature>
<feature type="chain" id="PRO_0000027918" description="Hypodermin-A">
    <location>
        <begin position="31"/>
        <end position="256"/>
    </location>
</feature>
<feature type="domain" description="Peptidase S1" evidence="3">
    <location>
        <begin position="31"/>
        <end position="254"/>
    </location>
</feature>
<feature type="active site" description="Charge relay system" evidence="1">
    <location>
        <position position="71"/>
    </location>
</feature>
<feature type="active site" description="Charge relay system" evidence="1">
    <location>
        <position position="116"/>
    </location>
</feature>
<feature type="active site" description="Charge relay system" evidence="1">
    <location>
        <position position="210"/>
    </location>
</feature>
<feature type="site" description="Required for specificity" evidence="1">
    <location>
        <position position="204"/>
    </location>
</feature>
<feature type="disulfide bond" evidence="3">
    <location>
        <begin position="56"/>
        <end position="72"/>
    </location>
</feature>
<feature type="disulfide bond" evidence="3">
    <location>
        <begin position="180"/>
        <end position="197"/>
    </location>
</feature>
<feature type="disulfide bond" evidence="3">
    <location>
        <begin position="206"/>
        <end position="230"/>
    </location>
</feature>
<feature type="sequence conflict" description="In Ref. 3; AA sequence." evidence="5" ref="3">
    <original>S</original>
    <variation>M</variation>
    <location>
        <position position="37"/>
    </location>
</feature>
<feature type="sequence conflict" description="In Ref. 3; AA sequence." evidence="5" ref="3">
    <original>Q</original>
    <variation>E</variation>
    <location>
        <position position="45"/>
    </location>
</feature>
<feature type="sequence conflict" description="In Ref. 3; AA sequence." evidence="5" ref="3">
    <original>D</original>
    <variation>P</variation>
    <location>
        <position position="51"/>
    </location>
</feature>
<feature type="sequence conflict" description="In Ref. 2; AAA29224." evidence="5" ref="2">
    <original>L</original>
    <variation>W</variation>
    <location>
        <position position="248"/>
    </location>
</feature>
<keyword id="KW-0903">Direct protein sequencing</keyword>
<keyword id="KW-1015">Disulfide bond</keyword>
<keyword id="KW-0378">Hydrolase</keyword>
<keyword id="KW-0645">Protease</keyword>
<keyword id="KW-0964">Secreted</keyword>
<keyword id="KW-0720">Serine protease</keyword>
<keyword id="KW-0732">Signal</keyword>
<keyword id="KW-0865">Zymogen</keyword>
<reference key="1">
    <citation type="journal article" date="1994" name="Mol. Biochem. Parasitol.">
        <title>Sequencing and gene expression of hypodermins A, B, C in larval stages of Hypoderma lineatum.</title>
        <authorList>
            <person name="Moire N."/>
            <person name="Bigot Y."/>
            <person name="Periquet G."/>
            <person name="Boulard C."/>
        </authorList>
    </citation>
    <scope>NUCLEOTIDE SEQUENCE [MRNA]</scope>
</reference>
<reference key="2">
    <citation type="submission" date="1993-10" db="EMBL/GenBank/DDBJ databases">
        <title>Cloning, expression and immunogenicity of hypodermins A and B of Hypoderma lineatum.</title>
        <authorList>
            <person name="Kuhn I."/>
            <person name="Files J.G."/>
            <person name="Pruett J.H."/>
            <person name="Temeyer K.B."/>
        </authorList>
    </citation>
    <scope>NUCLEOTIDE SEQUENCE [MRNA] OF 3-256</scope>
</reference>
<reference key="3">
    <citation type="journal article" date="1981" name="Biochim. Biophys. Acta">
        <title>Hypodermin A, a trypsin-like neutral proteinase from the insect Hypoderma lineatum.</title>
        <authorList>
            <person name="Tong N.T."/>
            <person name="Imhoff J.M."/>
            <person name="Lecroisey A."/>
            <person name="Keil B."/>
        </authorList>
    </citation>
    <scope>PROTEIN SEQUENCE OF 31-51</scope>
</reference>
<dbReference type="EC" id="3.4.21.-"/>
<dbReference type="EMBL" id="X74303">
    <property type="protein sequence ID" value="CAA52356.1"/>
    <property type="molecule type" value="mRNA"/>
</dbReference>
<dbReference type="EMBL" id="L24914">
    <property type="protein sequence ID" value="AAA29224.1"/>
    <property type="molecule type" value="mRNA"/>
</dbReference>
<dbReference type="PIR" id="A21590">
    <property type="entry name" value="A21590"/>
</dbReference>
<dbReference type="SMR" id="P35587"/>
<dbReference type="MEROPS" id="S01.111"/>
<dbReference type="GO" id="GO:0005576">
    <property type="term" value="C:extracellular region"/>
    <property type="evidence" value="ECO:0007669"/>
    <property type="project" value="UniProtKB-SubCell"/>
</dbReference>
<dbReference type="GO" id="GO:0004252">
    <property type="term" value="F:serine-type endopeptidase activity"/>
    <property type="evidence" value="ECO:0007669"/>
    <property type="project" value="InterPro"/>
</dbReference>
<dbReference type="GO" id="GO:0006508">
    <property type="term" value="P:proteolysis"/>
    <property type="evidence" value="ECO:0007669"/>
    <property type="project" value="UniProtKB-KW"/>
</dbReference>
<dbReference type="CDD" id="cd00190">
    <property type="entry name" value="Tryp_SPc"/>
    <property type="match status" value="1"/>
</dbReference>
<dbReference type="FunFam" id="2.40.10.10:FF:000077">
    <property type="entry name" value="Predicted protein"/>
    <property type="match status" value="1"/>
</dbReference>
<dbReference type="Gene3D" id="2.40.10.10">
    <property type="entry name" value="Trypsin-like serine proteases"/>
    <property type="match status" value="1"/>
</dbReference>
<dbReference type="InterPro" id="IPR050430">
    <property type="entry name" value="Peptidase_S1"/>
</dbReference>
<dbReference type="InterPro" id="IPR009003">
    <property type="entry name" value="Peptidase_S1_PA"/>
</dbReference>
<dbReference type="InterPro" id="IPR043504">
    <property type="entry name" value="Peptidase_S1_PA_chymotrypsin"/>
</dbReference>
<dbReference type="InterPro" id="IPR001314">
    <property type="entry name" value="Peptidase_S1A"/>
</dbReference>
<dbReference type="InterPro" id="IPR001254">
    <property type="entry name" value="Trypsin_dom"/>
</dbReference>
<dbReference type="InterPro" id="IPR018114">
    <property type="entry name" value="TRYPSIN_HIS"/>
</dbReference>
<dbReference type="InterPro" id="IPR033116">
    <property type="entry name" value="TRYPSIN_SER"/>
</dbReference>
<dbReference type="PANTHER" id="PTHR24276:SF91">
    <property type="entry name" value="AT26814P-RELATED"/>
    <property type="match status" value="1"/>
</dbReference>
<dbReference type="PANTHER" id="PTHR24276">
    <property type="entry name" value="POLYSERASE-RELATED"/>
    <property type="match status" value="1"/>
</dbReference>
<dbReference type="Pfam" id="PF00089">
    <property type="entry name" value="Trypsin"/>
    <property type="match status" value="1"/>
</dbReference>
<dbReference type="PRINTS" id="PR00722">
    <property type="entry name" value="CHYMOTRYPSIN"/>
</dbReference>
<dbReference type="SMART" id="SM00020">
    <property type="entry name" value="Tryp_SPc"/>
    <property type="match status" value="1"/>
</dbReference>
<dbReference type="SUPFAM" id="SSF50494">
    <property type="entry name" value="Trypsin-like serine proteases"/>
    <property type="match status" value="1"/>
</dbReference>
<dbReference type="PROSITE" id="PS50240">
    <property type="entry name" value="TRYPSIN_DOM"/>
    <property type="match status" value="1"/>
</dbReference>
<dbReference type="PROSITE" id="PS00134">
    <property type="entry name" value="TRYPSIN_HIS"/>
    <property type="match status" value="1"/>
</dbReference>
<dbReference type="PROSITE" id="PS00135">
    <property type="entry name" value="TRYPSIN_SER"/>
    <property type="match status" value="1"/>
</dbReference>
<evidence type="ECO:0000250" key="1"/>
<evidence type="ECO:0000255" key="2"/>
<evidence type="ECO:0000255" key="3">
    <source>
        <dbReference type="PROSITE-ProRule" id="PRU00274"/>
    </source>
</evidence>
<evidence type="ECO:0000269" key="4">
    <source>
    </source>
</evidence>
<evidence type="ECO:0000305" key="5"/>
<comment type="function">
    <text>Specificity, limited to carboxyl side of arginine residue in B-chain of insulin.</text>
</comment>
<comment type="subcellular location">
    <subcellularLocation>
        <location>Secreted</location>
    </subcellularLocation>
</comment>
<comment type="developmental stage">
    <text>Larval-specific.</text>
</comment>
<comment type="similarity">
    <text evidence="3">Belongs to the peptidase S1 family.</text>
</comment>
<organism>
    <name type="scientific">Hypoderma lineatum</name>
    <name type="common">Early cattle grub</name>
    <name type="synonym">Common cattle grub</name>
    <dbReference type="NCBI Taxonomy" id="7389"/>
    <lineage>
        <taxon>Eukaryota</taxon>
        <taxon>Metazoa</taxon>
        <taxon>Ecdysozoa</taxon>
        <taxon>Arthropoda</taxon>
        <taxon>Hexapoda</taxon>
        <taxon>Insecta</taxon>
        <taxon>Pterygota</taxon>
        <taxon>Neoptera</taxon>
        <taxon>Endopterygota</taxon>
        <taxon>Diptera</taxon>
        <taxon>Brachycera</taxon>
        <taxon>Muscomorpha</taxon>
        <taxon>Oestroidea</taxon>
        <taxon>Oestridae</taxon>
        <taxon>Hypodermatinae</taxon>
        <taxon>Hypoderma</taxon>
    </lineage>
</organism>
<sequence>MLKFVILLCSIAYVFGAVVPLGMLSQSDGRIVGGVESKIEDFPWQISLQRDGRHYCGGSIYSKNVIITAAHCLRNVVAEELRVRVGSSYWEHGGSLRNISKFQIHESYVEPTKEYDVALLKLDSDLSFNSTIKAIELTNEIPPEYADAIVSGWGETLVPPPGIPDQLRSVDVKIIHREKCASRNFGYGSNIKASMICAYAIGKDSCQGDSGGPLVVNNLLVGVVSWGIDCARPSYPGVYVDVSHVRSLIVSNAESI</sequence>
<name>HYPA_HYPLI</name>
<protein>
    <recommendedName>
        <fullName>Hypodermin-A</fullName>
        <shortName>HA</shortName>
        <ecNumber>3.4.21.-</ecNumber>
    </recommendedName>
</protein>
<proteinExistence type="evidence at protein level"/>